<evidence type="ECO:0000250" key="1"/>
<evidence type="ECO:0000255" key="2"/>
<evidence type="ECO:0000255" key="3">
    <source>
        <dbReference type="PROSITE-ProRule" id="PRU00192"/>
    </source>
</evidence>
<evidence type="ECO:0000256" key="4">
    <source>
        <dbReference type="SAM" id="MobiDB-lite"/>
    </source>
</evidence>
<evidence type="ECO:0000269" key="5">
    <source>
    </source>
</evidence>
<evidence type="ECO:0000305" key="6"/>
<dbReference type="EMBL" id="EU797514">
    <property type="protein sequence ID" value="ACI88855.1"/>
    <property type="molecule type" value="Genomic_DNA"/>
</dbReference>
<dbReference type="RefSeq" id="XP_002618584.1">
    <property type="nucleotide sequence ID" value="XM_002618538.1"/>
</dbReference>
<dbReference type="SMR" id="B8R1V5"/>
<dbReference type="KEGG" id="clu:CLUG_02043"/>
<dbReference type="VEuPathDB" id="FungiDB:CLUG_02043"/>
<dbReference type="OrthoDB" id="5983572at2759"/>
<dbReference type="GO" id="GO:0005886">
    <property type="term" value="C:plasma membrane"/>
    <property type="evidence" value="ECO:0007669"/>
    <property type="project" value="UniProtKB-SubCell"/>
</dbReference>
<dbReference type="GO" id="GO:0030833">
    <property type="term" value="P:regulation of actin filament polymerization"/>
    <property type="evidence" value="ECO:0007669"/>
    <property type="project" value="TreeGrafter"/>
</dbReference>
<dbReference type="CDD" id="cd11855">
    <property type="entry name" value="SH3_Sho1p"/>
    <property type="match status" value="1"/>
</dbReference>
<dbReference type="FunFam" id="2.30.30.40:FF:000213">
    <property type="entry name" value="High osmolarity signaling protein SHO1"/>
    <property type="match status" value="1"/>
</dbReference>
<dbReference type="Gene3D" id="2.30.30.40">
    <property type="entry name" value="SH3 Domains"/>
    <property type="match status" value="1"/>
</dbReference>
<dbReference type="InterPro" id="IPR036028">
    <property type="entry name" value="SH3-like_dom_sf"/>
</dbReference>
<dbReference type="InterPro" id="IPR001452">
    <property type="entry name" value="SH3_domain"/>
</dbReference>
<dbReference type="InterPro" id="IPR035522">
    <property type="entry name" value="Sho1_SH3"/>
</dbReference>
<dbReference type="PANTHER" id="PTHR15735">
    <property type="entry name" value="FCH AND DOUBLE SH3 DOMAINS PROTEIN"/>
    <property type="match status" value="1"/>
</dbReference>
<dbReference type="PANTHER" id="PTHR15735:SF20">
    <property type="entry name" value="HIGH OSMOLARITY SIGNALING PROTEIN SHO1"/>
    <property type="match status" value="1"/>
</dbReference>
<dbReference type="Pfam" id="PF14604">
    <property type="entry name" value="SH3_9"/>
    <property type="match status" value="1"/>
</dbReference>
<dbReference type="PRINTS" id="PR00452">
    <property type="entry name" value="SH3DOMAIN"/>
</dbReference>
<dbReference type="SMART" id="SM00326">
    <property type="entry name" value="SH3"/>
    <property type="match status" value="1"/>
</dbReference>
<dbReference type="SUPFAM" id="SSF50044">
    <property type="entry name" value="SH3-domain"/>
    <property type="match status" value="1"/>
</dbReference>
<dbReference type="PROSITE" id="PS50002">
    <property type="entry name" value="SH3"/>
    <property type="match status" value="1"/>
</dbReference>
<keyword id="KW-1003">Cell membrane</keyword>
<keyword id="KW-0472">Membrane</keyword>
<keyword id="KW-0728">SH3 domain</keyword>
<keyword id="KW-0346">Stress response</keyword>
<keyword id="KW-0812">Transmembrane</keyword>
<keyword id="KW-1133">Transmembrane helix</keyword>
<proteinExistence type="inferred from homology"/>
<comment type="function">
    <text evidence="5">Plasma membrane osmosensor that activates the high osmolarity glycerol (HOG) MAPK signaling pathway in response to high osmolarity. Mediates resistance to oxidative stress and plays a crucial role of in the pseudohyphae morphogenetic transitions.</text>
</comment>
<comment type="subunit">
    <text evidence="1">Forms homooligomers.</text>
</comment>
<comment type="subcellular location">
    <subcellularLocation>
        <location evidence="1">Cell membrane</location>
        <topology evidence="1">Multi-pass membrane protein</topology>
    </subcellularLocation>
</comment>
<comment type="similarity">
    <text evidence="6">Belongs to the SHO1 family.</text>
</comment>
<accession>B8R1V5</accession>
<sequence length="299" mass="32749">MGFRMANFLGDPFAISTVSFGVIAWIVAIAGAGSSASDNFPRFTWWGLVYEILLIIMVFLLYLNNTIELYKFTLVGLLSVGFLYTTNSTNNLIYSSNSGNLCCAAGCILLSMLNFLWIVYFGGHPESPSNQFIDSFAMKSSYAQQLPSEKNDDHEFAVPRSASGSQGFGVSDSRHSQLTNSKSGYMSSSQLNGLENFSHTNVQNTGTVGASNPASMPNTVYNTNGTNTADSNFAVPVSTFRYKARALYSYDASPDDINEISFVKDEILEVDDIDGKWWQARRANGQVGICPSNYVKLLD</sequence>
<reference key="1">
    <citation type="journal article" date="2008" name="Yeast">
        <title>Role of Sho1p adaptor in the pseudohyphal development, drugs sensitivity, osmotolerance and oxidant stress adaptation in the opportunistic yeast Candida lusitaniae.</title>
        <authorList>
            <person name="Boisnard S."/>
            <person name="Ruprich-Robert G."/>
            <person name="Da Silva B."/>
            <person name="Chapeland-Leclerc F."/>
            <person name="Papon N."/>
        </authorList>
    </citation>
    <scope>NUCLEOTIDE SEQUENCE [GENOMIC DNA]</scope>
    <scope>FUNCTION</scope>
</reference>
<name>SHO1_CLALS</name>
<gene>
    <name type="primary">SHO1</name>
</gene>
<feature type="chain" id="PRO_0000410370" description="High osmolarity signaling protein SHO1">
    <location>
        <begin position="1"/>
        <end position="299"/>
    </location>
</feature>
<feature type="topological domain" description="Cytoplasmic" evidence="2">
    <location>
        <begin position="1"/>
        <end position="12"/>
    </location>
</feature>
<feature type="transmembrane region" description="Helical" evidence="2">
    <location>
        <begin position="13"/>
        <end position="33"/>
    </location>
</feature>
<feature type="topological domain" description="Extracellular" evidence="2">
    <location>
        <begin position="34"/>
        <end position="42"/>
    </location>
</feature>
<feature type="transmembrane region" description="Helical" evidence="2">
    <location>
        <begin position="43"/>
        <end position="63"/>
    </location>
</feature>
<feature type="topological domain" description="Cytoplasmic" evidence="2">
    <location>
        <begin position="64"/>
        <end position="65"/>
    </location>
</feature>
<feature type="transmembrane region" description="Helical" evidence="2">
    <location>
        <begin position="66"/>
        <end position="86"/>
    </location>
</feature>
<feature type="topological domain" description="Extracellular" evidence="2">
    <location>
        <begin position="87"/>
        <end position="100"/>
    </location>
</feature>
<feature type="transmembrane region" description="Helical" evidence="2">
    <location>
        <begin position="101"/>
        <end position="121"/>
    </location>
</feature>
<feature type="topological domain" description="Cytoplasmic" evidence="2">
    <location>
        <begin position="122"/>
        <end position="299"/>
    </location>
</feature>
<feature type="domain" description="SH3" evidence="3">
    <location>
        <begin position="239"/>
        <end position="299"/>
    </location>
</feature>
<feature type="region of interest" description="Disordered" evidence="4">
    <location>
        <begin position="153"/>
        <end position="182"/>
    </location>
</feature>
<protein>
    <recommendedName>
        <fullName>High osmolarity signaling protein SHO1</fullName>
    </recommendedName>
    <alternativeName>
        <fullName>Osmosensor SHO1</fullName>
    </alternativeName>
</protein>
<organism>
    <name type="scientific">Clavispora lusitaniae</name>
    <name type="common">Candida lusitaniae</name>
    <dbReference type="NCBI Taxonomy" id="36911"/>
    <lineage>
        <taxon>Eukaryota</taxon>
        <taxon>Fungi</taxon>
        <taxon>Dikarya</taxon>
        <taxon>Ascomycota</taxon>
        <taxon>Saccharomycotina</taxon>
        <taxon>Pichiomycetes</taxon>
        <taxon>Metschnikowiaceae</taxon>
        <taxon>Clavispora</taxon>
    </lineage>
</organism>